<keyword id="KW-0150">Chloroplast</keyword>
<keyword id="KW-0249">Electron transport</keyword>
<keyword id="KW-0472">Membrane</keyword>
<keyword id="KW-0602">Photosynthesis</keyword>
<keyword id="KW-0934">Plastid</keyword>
<keyword id="KW-0793">Thylakoid</keyword>
<keyword id="KW-0812">Transmembrane</keyword>
<keyword id="KW-1133">Transmembrane helix</keyword>
<keyword id="KW-0813">Transport</keyword>
<accession>B1A928</accession>
<reference key="1">
    <citation type="journal article" date="2008" name="Nature">
        <title>The draft genome of the transgenic tropical fruit tree papaya (Carica papaya Linnaeus).</title>
        <authorList>
            <person name="Ming R."/>
            <person name="Hou S."/>
            <person name="Feng Y."/>
            <person name="Yu Q."/>
            <person name="Dionne-Laporte A."/>
            <person name="Saw J.H."/>
            <person name="Senin P."/>
            <person name="Wang W."/>
            <person name="Ly B.V."/>
            <person name="Lewis K.L."/>
            <person name="Salzberg S.L."/>
            <person name="Feng L."/>
            <person name="Jones M.R."/>
            <person name="Skelton R.L."/>
            <person name="Murray J.E."/>
            <person name="Chen C."/>
            <person name="Qian W."/>
            <person name="Shen J."/>
            <person name="Du P."/>
            <person name="Eustice M."/>
            <person name="Tong E."/>
            <person name="Tang H."/>
            <person name="Lyons E."/>
            <person name="Paull R.E."/>
            <person name="Michael T.P."/>
            <person name="Wall K."/>
            <person name="Rice D.W."/>
            <person name="Albert H."/>
            <person name="Wang M.L."/>
            <person name="Zhu Y.J."/>
            <person name="Schatz M."/>
            <person name="Nagarajan N."/>
            <person name="Acob R.A."/>
            <person name="Guan P."/>
            <person name="Blas A."/>
            <person name="Wai C.M."/>
            <person name="Ackerman C.M."/>
            <person name="Ren Y."/>
            <person name="Liu C."/>
            <person name="Wang J."/>
            <person name="Wang J."/>
            <person name="Na J.K."/>
            <person name="Shakirov E.V."/>
            <person name="Haas B."/>
            <person name="Thimmapuram J."/>
            <person name="Nelson D."/>
            <person name="Wang X."/>
            <person name="Bowers J.E."/>
            <person name="Gschwend A.R."/>
            <person name="Delcher A.L."/>
            <person name="Singh R."/>
            <person name="Suzuki J.Y."/>
            <person name="Tripathi S."/>
            <person name="Neupane K."/>
            <person name="Wei H."/>
            <person name="Irikura B."/>
            <person name="Paidi M."/>
            <person name="Jiang N."/>
            <person name="Zhang W."/>
            <person name="Presting G."/>
            <person name="Windsor A."/>
            <person name="Navajas-Perez R."/>
            <person name="Torres M.J."/>
            <person name="Feltus F.A."/>
            <person name="Porter B."/>
            <person name="Li Y."/>
            <person name="Burroughs A.M."/>
            <person name="Luo M.C."/>
            <person name="Liu L."/>
            <person name="Christopher D.A."/>
            <person name="Mount S.M."/>
            <person name="Moore P.H."/>
            <person name="Sugimura T."/>
            <person name="Jiang J."/>
            <person name="Schuler M.A."/>
            <person name="Friedman V."/>
            <person name="Mitchell-Olds T."/>
            <person name="Shippen D.E."/>
            <person name="dePamphilis C.W."/>
            <person name="Palmer J.D."/>
            <person name="Freeling M."/>
            <person name="Paterson A.H."/>
            <person name="Gonsalves D."/>
            <person name="Wang L."/>
            <person name="Alam M."/>
        </authorList>
    </citation>
    <scope>NUCLEOTIDE SEQUENCE [LARGE SCALE GENOMIC DNA]</scope>
    <source>
        <strain>cv. SunUp</strain>
    </source>
</reference>
<sequence>MDIVSLAWAALMVVFTFSLSLVVWGRSGL</sequence>
<name>PETN_CARPA</name>
<proteinExistence type="inferred from homology"/>
<organism>
    <name type="scientific">Carica papaya</name>
    <name type="common">Papaya</name>
    <dbReference type="NCBI Taxonomy" id="3649"/>
    <lineage>
        <taxon>Eukaryota</taxon>
        <taxon>Viridiplantae</taxon>
        <taxon>Streptophyta</taxon>
        <taxon>Embryophyta</taxon>
        <taxon>Tracheophyta</taxon>
        <taxon>Spermatophyta</taxon>
        <taxon>Magnoliopsida</taxon>
        <taxon>eudicotyledons</taxon>
        <taxon>Gunneridae</taxon>
        <taxon>Pentapetalae</taxon>
        <taxon>rosids</taxon>
        <taxon>malvids</taxon>
        <taxon>Brassicales</taxon>
        <taxon>Caricaceae</taxon>
        <taxon>Carica</taxon>
    </lineage>
</organism>
<feature type="chain" id="PRO_0000355426" description="Cytochrome b6-f complex subunit 8">
    <location>
        <begin position="1"/>
        <end position="29"/>
    </location>
</feature>
<feature type="transmembrane region" description="Helical" evidence="1">
    <location>
        <begin position="3"/>
        <end position="23"/>
    </location>
</feature>
<evidence type="ECO:0000255" key="1">
    <source>
        <dbReference type="HAMAP-Rule" id="MF_00395"/>
    </source>
</evidence>
<comment type="function">
    <text evidence="1">Component of the cytochrome b6-f complex, which mediates electron transfer between photosystem II (PSII) and photosystem I (PSI), cyclic electron flow around PSI, and state transitions.</text>
</comment>
<comment type="subunit">
    <text evidence="1">The 4 large subunits of the cytochrome b6-f complex are cytochrome b6, subunit IV (17 kDa polypeptide, PetD), cytochrome f and the Rieske protein, while the 4 small subunits are PetG, PetL, PetM and PetN. The complex functions as a dimer.</text>
</comment>
<comment type="subcellular location">
    <subcellularLocation>
        <location evidence="1">Plastid</location>
        <location evidence="1">Chloroplast thylakoid membrane</location>
        <topology evidence="1">Single-pass membrane protein</topology>
    </subcellularLocation>
</comment>
<comment type="similarity">
    <text evidence="1">Belongs to the PetN family.</text>
</comment>
<dbReference type="EMBL" id="EU431223">
    <property type="protein sequence ID" value="ABY86775.1"/>
    <property type="molecule type" value="Genomic_DNA"/>
</dbReference>
<dbReference type="RefSeq" id="YP_001671676.1">
    <property type="nucleotide sequence ID" value="NC_010323.1"/>
</dbReference>
<dbReference type="SMR" id="B1A928"/>
<dbReference type="GeneID" id="5878342"/>
<dbReference type="KEGG" id="cpap:5878342"/>
<dbReference type="GO" id="GO:0009535">
    <property type="term" value="C:chloroplast thylakoid membrane"/>
    <property type="evidence" value="ECO:0007669"/>
    <property type="project" value="UniProtKB-SubCell"/>
</dbReference>
<dbReference type="GO" id="GO:0009512">
    <property type="term" value="C:cytochrome b6f complex"/>
    <property type="evidence" value="ECO:0007669"/>
    <property type="project" value="InterPro"/>
</dbReference>
<dbReference type="GO" id="GO:0045158">
    <property type="term" value="F:electron transporter, transferring electrons within cytochrome b6/f complex of photosystem II activity"/>
    <property type="evidence" value="ECO:0007669"/>
    <property type="project" value="InterPro"/>
</dbReference>
<dbReference type="GO" id="GO:0017004">
    <property type="term" value="P:cytochrome complex assembly"/>
    <property type="evidence" value="ECO:0007669"/>
    <property type="project" value="UniProtKB-UniRule"/>
</dbReference>
<dbReference type="GO" id="GO:0015979">
    <property type="term" value="P:photosynthesis"/>
    <property type="evidence" value="ECO:0007669"/>
    <property type="project" value="UniProtKB-KW"/>
</dbReference>
<dbReference type="HAMAP" id="MF_00395">
    <property type="entry name" value="Cytb6_f_PetN"/>
    <property type="match status" value="1"/>
</dbReference>
<dbReference type="InterPro" id="IPR036143">
    <property type="entry name" value="Cytochr_b6-f_cplx_su8_sf"/>
</dbReference>
<dbReference type="InterPro" id="IPR005497">
    <property type="entry name" value="Cytochrome_b6-f_cplx_su8"/>
</dbReference>
<dbReference type="Pfam" id="PF03742">
    <property type="entry name" value="PetN"/>
    <property type="match status" value="1"/>
</dbReference>
<dbReference type="SUPFAM" id="SSF103451">
    <property type="entry name" value="PetN subunit of the cytochrome b6f complex"/>
    <property type="match status" value="1"/>
</dbReference>
<protein>
    <recommendedName>
        <fullName evidence="1">Cytochrome b6-f complex subunit 8</fullName>
    </recommendedName>
    <alternativeName>
        <fullName evidence="1">Cytochrome b6-f complex subunit PetN</fullName>
    </alternativeName>
    <alternativeName>
        <fullName evidence="1">Cytochrome b6-f complex subunit VIII</fullName>
    </alternativeName>
</protein>
<geneLocation type="chloroplast"/>
<gene>
    <name evidence="1" type="primary">petN</name>
</gene>